<proteinExistence type="evidence at protein level"/>
<name>PGLR2_PECPM</name>
<protein>
    <recommendedName>
        <fullName>Endo-polygalacturonase</fullName>
        <ecNumber evidence="2">3.2.1.15</ecNumber>
    </recommendedName>
</protein>
<sequence>MEYQSGKRVLSLSLGLIGLFSASAWASDSRTVSEPKTPSSCTTLKADSSTATSTIQKALNNCDQGKAVRLSAGSTSVFLSGPLSLPSGVSLLIDKGVTLRAVNNAKSFENAPSSCGVVDKNGKGCDAFITAVSTTNSGIYGPGTIDGQGGVKLQDKKVSWWELAADAKVKKLKQNTPRLIQINKSKNFTLYNVSLINSPNFHVVFSDGDGFTAWKTTIKTPSTARNTDGIDPMSSKNITIAYSNIATGDDNVAIKAYKGRAETRNISILHNDFGTGHGMSIGSETMGVYNVTVDDLKMNGTTNGLRIKSDKSAAGVVNGVRYSNVVMKNVAKPIVIDTVYEKKEGSNVPDWSDITFKDVTSETKGVVVLNGENAKKPIEVTMKNVKLTSDSTWQIKNVNVKK</sequence>
<reference key="1">
    <citation type="journal article" date="1990" name="Mol. Microbiol.">
        <title>Structural analysis of the pehA gene and characterization of its protein product, endopolygalacturonase, of Erwinia carotovora subspecies carotovora.</title>
        <authorList>
            <person name="Saarilahti H.T."/>
            <person name="Heino P."/>
            <person name="Pakkanen R."/>
            <person name="Kalkkinen N."/>
            <person name="Palva I."/>
            <person name="Palva E.T."/>
        </authorList>
    </citation>
    <scope>NUCLEOTIDE SEQUENCE [GENOMIC DNA]</scope>
    <scope>FUNCTION</scope>
    <scope>CATALYTIC ACTIVITY</scope>
    <scope>SUBCELLULAR LOCATION</scope>
    <source>
        <strain>SCC3193</strain>
    </source>
</reference>
<reference key="2">
    <citation type="journal article" date="2012" name="J. Bacteriol.">
        <title>Genome sequence of Pectobacterium sp. strain SCC3193.</title>
        <authorList>
            <person name="Koskinen J.P."/>
            <person name="Laine P."/>
            <person name="Niemi O."/>
            <person name="Nykyri J."/>
            <person name="Harjunpaa H."/>
            <person name="Auvinen P."/>
            <person name="Paulin L."/>
            <person name="Pirhonen M."/>
            <person name="Palva T."/>
            <person name="Holm L."/>
        </authorList>
    </citation>
    <scope>NUCLEOTIDE SEQUENCE [LARGE SCALE GENOMIC DNA]</scope>
    <source>
        <strain>SCC3193</strain>
    </source>
</reference>
<reference key="3">
    <citation type="journal article" date="1998" name="J. Biol. Chem.">
        <title>Crystal structure of polygalacturonase from Erwinia carotovora ssp. carotovora.</title>
        <authorList>
            <person name="Pickersgill R."/>
            <person name="Smith D."/>
            <person name="Worboys K."/>
            <person name="Jenkins J."/>
        </authorList>
    </citation>
    <scope>X-RAY CRYSTALLOGRAPHY (1.9 ANGSTROMS)</scope>
    <scope>SUBUNIT</scope>
</reference>
<accession>P26509</accession>
<accession>K4FKA4</accession>
<comment type="function">
    <text evidence="2">Involved in maceration and soft-rotting of plant tissue.</text>
</comment>
<comment type="catalytic activity">
    <reaction evidence="2">
        <text>(1,4-alpha-D-galacturonosyl)n+m + H2O = (1,4-alpha-D-galacturonosyl)n + (1,4-alpha-D-galacturonosyl)m.</text>
        <dbReference type="EC" id="3.2.1.15"/>
    </reaction>
</comment>
<comment type="subunit">
    <text evidence="3">Monomer.</text>
</comment>
<comment type="subcellular location">
    <subcellularLocation>
        <location evidence="2">Secreted</location>
    </subcellularLocation>
</comment>
<comment type="similarity">
    <text evidence="4">Belongs to the glycosyl hydrolase 28 family.</text>
</comment>
<evidence type="ECO:0000255" key="1">
    <source>
        <dbReference type="PROSITE-ProRule" id="PRU10052"/>
    </source>
</evidence>
<evidence type="ECO:0000269" key="2">
    <source>
    </source>
</evidence>
<evidence type="ECO:0000269" key="3">
    <source>
    </source>
</evidence>
<evidence type="ECO:0000305" key="4"/>
<evidence type="ECO:0007829" key="5">
    <source>
        <dbReference type="PDB" id="1BHE"/>
    </source>
</evidence>
<gene>
    <name type="primary">pehA</name>
    <name type="ordered locus">W5S_3318</name>
</gene>
<feature type="signal peptide">
    <location>
        <begin position="1"/>
        <end position="23"/>
    </location>
</feature>
<feature type="chain" id="PRO_0000024759" description="Endo-polygalacturonase">
    <location>
        <begin position="24"/>
        <end position="402"/>
    </location>
</feature>
<feature type="active site" description="Proton donor" evidence="1">
    <location>
        <position position="249"/>
    </location>
</feature>
<feature type="active site" evidence="4">
    <location>
        <position position="277"/>
    </location>
</feature>
<feature type="disulfide bond">
    <location>
        <begin position="41"/>
        <end position="62"/>
    </location>
</feature>
<feature type="disulfide bond">
    <location>
        <begin position="115"/>
        <end position="125"/>
    </location>
</feature>
<feature type="strand" evidence="5">
    <location>
        <begin position="40"/>
        <end position="45"/>
    </location>
</feature>
<feature type="strand" evidence="5">
    <location>
        <begin position="48"/>
        <end position="50"/>
    </location>
</feature>
<feature type="helix" evidence="5">
    <location>
        <begin position="52"/>
        <end position="59"/>
    </location>
</feature>
<feature type="strand" evidence="5">
    <location>
        <begin position="67"/>
        <end position="71"/>
    </location>
</feature>
<feature type="strand" evidence="5">
    <location>
        <begin position="73"/>
        <end position="81"/>
    </location>
</feature>
<feature type="strand" evidence="5">
    <location>
        <begin position="90"/>
        <end position="93"/>
    </location>
</feature>
<feature type="strand" evidence="5">
    <location>
        <begin position="98"/>
        <end position="101"/>
    </location>
</feature>
<feature type="helix" evidence="5">
    <location>
        <begin position="106"/>
        <end position="108"/>
    </location>
</feature>
<feature type="strand" evidence="5">
    <location>
        <begin position="109"/>
        <end position="111"/>
    </location>
</feature>
<feature type="strand" evidence="5">
    <location>
        <begin position="118"/>
        <end position="120"/>
    </location>
</feature>
<feature type="strand" evidence="5">
    <location>
        <begin position="128"/>
        <end position="133"/>
    </location>
</feature>
<feature type="strand" evidence="5">
    <location>
        <begin position="138"/>
        <end position="140"/>
    </location>
</feature>
<feature type="strand" evidence="5">
    <location>
        <begin position="142"/>
        <end position="146"/>
    </location>
</feature>
<feature type="strand" evidence="5">
    <location>
        <begin position="154"/>
        <end position="158"/>
    </location>
</feature>
<feature type="helix" evidence="5">
    <location>
        <begin position="162"/>
        <end position="170"/>
    </location>
</feature>
<feature type="strand" evidence="5">
    <location>
        <begin position="179"/>
        <end position="184"/>
    </location>
</feature>
<feature type="strand" evidence="5">
    <location>
        <begin position="186"/>
        <end position="196"/>
    </location>
</feature>
<feature type="strand" evidence="5">
    <location>
        <begin position="202"/>
        <end position="207"/>
    </location>
</feature>
<feature type="strand" evidence="5">
    <location>
        <begin position="209"/>
        <end position="219"/>
    </location>
</feature>
<feature type="strand" evidence="5">
    <location>
        <begin position="229"/>
        <end position="234"/>
    </location>
</feature>
<feature type="strand" evidence="5">
    <location>
        <begin position="236"/>
        <end position="242"/>
    </location>
</feature>
<feature type="strand" evidence="5">
    <location>
        <begin position="244"/>
        <end position="246"/>
    </location>
</feature>
<feature type="strand" evidence="5">
    <location>
        <begin position="251"/>
        <end position="256"/>
    </location>
</feature>
<feature type="strand" evidence="5">
    <location>
        <begin position="263"/>
        <end position="273"/>
    </location>
</feature>
<feature type="strand" evidence="5">
    <location>
        <begin position="275"/>
        <end position="277"/>
    </location>
</feature>
<feature type="strand" evidence="5">
    <location>
        <begin position="279"/>
        <end position="300"/>
    </location>
</feature>
<feature type="strand" evidence="5">
    <location>
        <begin position="302"/>
        <end position="308"/>
    </location>
</feature>
<feature type="turn" evidence="5">
    <location>
        <begin position="311"/>
        <end position="313"/>
    </location>
</feature>
<feature type="strand" evidence="5">
    <location>
        <begin position="316"/>
        <end position="329"/>
    </location>
</feature>
<feature type="strand" evidence="5">
    <location>
        <begin position="331"/>
        <end position="337"/>
    </location>
</feature>
<feature type="strand" evidence="5">
    <location>
        <begin position="350"/>
        <end position="361"/>
    </location>
</feature>
<feature type="strand" evidence="5">
    <location>
        <begin position="366"/>
        <end position="370"/>
    </location>
</feature>
<feature type="strand" evidence="5">
    <location>
        <begin position="378"/>
        <end position="386"/>
    </location>
</feature>
<feature type="strand" evidence="5">
    <location>
        <begin position="392"/>
        <end position="401"/>
    </location>
</feature>
<dbReference type="EC" id="3.2.1.15" evidence="2"/>
<dbReference type="EMBL" id="X51701">
    <property type="protein sequence ID" value="CAA35998.1"/>
    <property type="molecule type" value="Genomic_DNA"/>
</dbReference>
<dbReference type="EMBL" id="CP003415">
    <property type="protein sequence ID" value="AFI91392.1"/>
    <property type="molecule type" value="Genomic_DNA"/>
</dbReference>
<dbReference type="PIR" id="S11772">
    <property type="entry name" value="S11772"/>
</dbReference>
<dbReference type="RefSeq" id="WP_014700877.1">
    <property type="nucleotide sequence ID" value="NZ_WABT01000053.1"/>
</dbReference>
<dbReference type="PDB" id="1BHE">
    <property type="method" value="X-ray"/>
    <property type="resolution" value="1.90 A"/>
    <property type="chains" value="A=27-402"/>
</dbReference>
<dbReference type="PDBsum" id="1BHE"/>
<dbReference type="SMR" id="P26509"/>
<dbReference type="STRING" id="1905730.W5S_3318"/>
<dbReference type="CAZy" id="GH28">
    <property type="family name" value="Glycoside Hydrolase Family 28"/>
</dbReference>
<dbReference type="KEGG" id="pec:W5S_3318"/>
<dbReference type="PATRIC" id="fig|1166016.3.peg.3378"/>
<dbReference type="eggNOG" id="COG5434">
    <property type="taxonomic scope" value="Bacteria"/>
</dbReference>
<dbReference type="HOGENOM" id="CLU_016031_0_0_6"/>
<dbReference type="OMA" id="WETVEYS"/>
<dbReference type="EvolutionaryTrace" id="P26509"/>
<dbReference type="Proteomes" id="UP000008044">
    <property type="component" value="Chromosome"/>
</dbReference>
<dbReference type="GO" id="GO:0005576">
    <property type="term" value="C:extracellular region"/>
    <property type="evidence" value="ECO:0007669"/>
    <property type="project" value="UniProtKB-SubCell"/>
</dbReference>
<dbReference type="GO" id="GO:0004650">
    <property type="term" value="F:polygalacturonase activity"/>
    <property type="evidence" value="ECO:0007669"/>
    <property type="project" value="UniProtKB-EC"/>
</dbReference>
<dbReference type="GO" id="GO:0005975">
    <property type="term" value="P:carbohydrate metabolic process"/>
    <property type="evidence" value="ECO:0007669"/>
    <property type="project" value="InterPro"/>
</dbReference>
<dbReference type="GO" id="GO:0071555">
    <property type="term" value="P:cell wall organization"/>
    <property type="evidence" value="ECO:0007669"/>
    <property type="project" value="UniProtKB-KW"/>
</dbReference>
<dbReference type="Gene3D" id="2.160.20.10">
    <property type="entry name" value="Single-stranded right-handed beta-helix, Pectin lyase-like"/>
    <property type="match status" value="1"/>
</dbReference>
<dbReference type="InterPro" id="IPR051801">
    <property type="entry name" value="GH28_Enzymes"/>
</dbReference>
<dbReference type="InterPro" id="IPR000743">
    <property type="entry name" value="Glyco_hydro_28"/>
</dbReference>
<dbReference type="InterPro" id="IPR012334">
    <property type="entry name" value="Pectin_lyas_fold"/>
</dbReference>
<dbReference type="InterPro" id="IPR011050">
    <property type="entry name" value="Pectin_lyase_fold/virulence"/>
</dbReference>
<dbReference type="PANTHER" id="PTHR31339">
    <property type="entry name" value="PECTIN LYASE-RELATED"/>
    <property type="match status" value="1"/>
</dbReference>
<dbReference type="PANTHER" id="PTHR31339:SF9">
    <property type="entry name" value="PLASMIN AND FIBRONECTIN-BINDING PROTEIN A"/>
    <property type="match status" value="1"/>
</dbReference>
<dbReference type="Pfam" id="PF00295">
    <property type="entry name" value="Glyco_hydro_28"/>
    <property type="match status" value="1"/>
</dbReference>
<dbReference type="SUPFAM" id="SSF51126">
    <property type="entry name" value="Pectin lyase-like"/>
    <property type="match status" value="1"/>
</dbReference>
<dbReference type="PROSITE" id="PS00502">
    <property type="entry name" value="POLYGALACTURONASE"/>
    <property type="match status" value="1"/>
</dbReference>
<keyword id="KW-0002">3D-structure</keyword>
<keyword id="KW-0961">Cell wall biogenesis/degradation</keyword>
<keyword id="KW-1015">Disulfide bond</keyword>
<keyword id="KW-0326">Glycosidase</keyword>
<keyword id="KW-0378">Hydrolase</keyword>
<keyword id="KW-0964">Secreted</keyword>
<keyword id="KW-0732">Signal</keyword>
<organism>
    <name type="scientific">Pectobacterium parmentieri</name>
    <dbReference type="NCBI Taxonomy" id="1905730"/>
    <lineage>
        <taxon>Bacteria</taxon>
        <taxon>Pseudomonadati</taxon>
        <taxon>Pseudomonadota</taxon>
        <taxon>Gammaproteobacteria</taxon>
        <taxon>Enterobacterales</taxon>
        <taxon>Pectobacteriaceae</taxon>
        <taxon>Pectobacterium</taxon>
    </lineage>
</organism>